<comment type="function">
    <text evidence="1">Catalyzes the transfer of endogenously produced octanoic acid from octanoyl-acyl-carrier-protein onto the lipoyl domains of lipoate-dependent enzymes. Lipoyl-ACP can also act as a substrate although octanoyl-ACP is likely to be the physiological substrate.</text>
</comment>
<comment type="catalytic activity">
    <reaction evidence="1">
        <text>octanoyl-[ACP] + L-lysyl-[protein] = N(6)-octanoyl-L-lysyl-[protein] + holo-[ACP] + H(+)</text>
        <dbReference type="Rhea" id="RHEA:17665"/>
        <dbReference type="Rhea" id="RHEA-COMP:9636"/>
        <dbReference type="Rhea" id="RHEA-COMP:9685"/>
        <dbReference type="Rhea" id="RHEA-COMP:9752"/>
        <dbReference type="Rhea" id="RHEA-COMP:9928"/>
        <dbReference type="ChEBI" id="CHEBI:15378"/>
        <dbReference type="ChEBI" id="CHEBI:29969"/>
        <dbReference type="ChEBI" id="CHEBI:64479"/>
        <dbReference type="ChEBI" id="CHEBI:78463"/>
        <dbReference type="ChEBI" id="CHEBI:78809"/>
        <dbReference type="EC" id="2.3.1.181"/>
    </reaction>
</comment>
<comment type="pathway">
    <text evidence="1">Protein modification; protein lipoylation via endogenous pathway; protein N(6)-(lipoyl)lysine from octanoyl-[acyl-carrier-protein]: step 1/2.</text>
</comment>
<comment type="subcellular location">
    <subcellularLocation>
        <location evidence="1">Cytoplasm</location>
    </subcellularLocation>
</comment>
<comment type="miscellaneous">
    <text evidence="1">In the reaction, the free carboxyl group of octanoic acid is attached via an amide linkage to the epsilon-amino group of a specific lysine residue of lipoyl domains of lipoate-dependent enzymes.</text>
</comment>
<comment type="similarity">
    <text evidence="1">Belongs to the LipB family.</text>
</comment>
<proteinExistence type="inferred from homology"/>
<reference key="1">
    <citation type="journal article" date="2002" name="Nat. Genet.">
        <title>Genome sequence of the endocellular obligate symbiont of tsetse flies, Wigglesworthia glossinidia.</title>
        <authorList>
            <person name="Akman L."/>
            <person name="Yamashita A."/>
            <person name="Watanabe H."/>
            <person name="Oshima K."/>
            <person name="Shiba T."/>
            <person name="Hattori M."/>
            <person name="Aksoy S."/>
        </authorList>
    </citation>
    <scope>NUCLEOTIDE SEQUENCE [LARGE SCALE GENOMIC DNA]</scope>
</reference>
<organism>
    <name type="scientific">Wigglesworthia glossinidia brevipalpis</name>
    <dbReference type="NCBI Taxonomy" id="36870"/>
    <lineage>
        <taxon>Bacteria</taxon>
        <taxon>Pseudomonadati</taxon>
        <taxon>Pseudomonadota</taxon>
        <taxon>Gammaproteobacteria</taxon>
        <taxon>Enterobacterales</taxon>
        <taxon>Erwiniaceae</taxon>
        <taxon>Wigglesworthia</taxon>
    </lineage>
</organism>
<sequence>MNKVNFRILGLQKYQDIYYIMQKFITCLKKNNINEIWLLEHYPVFTQGNSDNFNKKYIFNIPVVKTDRGGHMTFHGPGQKIIYFLLNIKNLNIKISKLIFYLENIIISTLSYFKINSYSIKNSPGVYVDKKKICSIGLRIKDGYSLHGLALNVDMDLYPFSHIHPCGDKNIKMTQIRDLISNINLEKLNTQIINNCKKFLMMNNFEINFLNSIKIF</sequence>
<dbReference type="EC" id="2.3.1.181" evidence="1"/>
<dbReference type="EMBL" id="BA000021">
    <property type="protein sequence ID" value="BAC24321.1"/>
    <property type="molecule type" value="Genomic_DNA"/>
</dbReference>
<dbReference type="SMR" id="Q8D326"/>
<dbReference type="STRING" id="36870.gene:10368663"/>
<dbReference type="KEGG" id="wbr:lipB"/>
<dbReference type="eggNOG" id="COG0321">
    <property type="taxonomic scope" value="Bacteria"/>
</dbReference>
<dbReference type="HOGENOM" id="CLU_035168_3_1_6"/>
<dbReference type="OrthoDB" id="9787061at2"/>
<dbReference type="UniPathway" id="UPA00538">
    <property type="reaction ID" value="UER00592"/>
</dbReference>
<dbReference type="Proteomes" id="UP000000562">
    <property type="component" value="Chromosome"/>
</dbReference>
<dbReference type="GO" id="GO:0005737">
    <property type="term" value="C:cytoplasm"/>
    <property type="evidence" value="ECO:0007669"/>
    <property type="project" value="UniProtKB-SubCell"/>
</dbReference>
<dbReference type="GO" id="GO:0033819">
    <property type="term" value="F:lipoyl(octanoyl) transferase activity"/>
    <property type="evidence" value="ECO:0007669"/>
    <property type="project" value="UniProtKB-EC"/>
</dbReference>
<dbReference type="GO" id="GO:0036211">
    <property type="term" value="P:protein modification process"/>
    <property type="evidence" value="ECO:0007669"/>
    <property type="project" value="InterPro"/>
</dbReference>
<dbReference type="CDD" id="cd16444">
    <property type="entry name" value="LipB"/>
    <property type="match status" value="1"/>
</dbReference>
<dbReference type="FunFam" id="3.30.930.10:FF:000020">
    <property type="entry name" value="Octanoyltransferase"/>
    <property type="match status" value="1"/>
</dbReference>
<dbReference type="Gene3D" id="3.30.930.10">
    <property type="entry name" value="Bira Bifunctional Protein, Domain 2"/>
    <property type="match status" value="1"/>
</dbReference>
<dbReference type="HAMAP" id="MF_00013">
    <property type="entry name" value="LipB"/>
    <property type="match status" value="1"/>
</dbReference>
<dbReference type="InterPro" id="IPR045864">
    <property type="entry name" value="aa-tRNA-synth_II/BPL/LPL"/>
</dbReference>
<dbReference type="InterPro" id="IPR004143">
    <property type="entry name" value="BPL_LPL_catalytic"/>
</dbReference>
<dbReference type="InterPro" id="IPR000544">
    <property type="entry name" value="Octanoyltransferase"/>
</dbReference>
<dbReference type="InterPro" id="IPR020605">
    <property type="entry name" value="Octanoyltransferase_CS"/>
</dbReference>
<dbReference type="NCBIfam" id="TIGR00214">
    <property type="entry name" value="lipB"/>
    <property type="match status" value="1"/>
</dbReference>
<dbReference type="PANTHER" id="PTHR10993:SF7">
    <property type="entry name" value="LIPOYLTRANSFERASE 2, MITOCHONDRIAL-RELATED"/>
    <property type="match status" value="1"/>
</dbReference>
<dbReference type="PANTHER" id="PTHR10993">
    <property type="entry name" value="OCTANOYLTRANSFERASE"/>
    <property type="match status" value="1"/>
</dbReference>
<dbReference type="Pfam" id="PF21948">
    <property type="entry name" value="LplA-B_cat"/>
    <property type="match status" value="1"/>
</dbReference>
<dbReference type="PIRSF" id="PIRSF016262">
    <property type="entry name" value="LPLase"/>
    <property type="match status" value="1"/>
</dbReference>
<dbReference type="SUPFAM" id="SSF55681">
    <property type="entry name" value="Class II aaRS and biotin synthetases"/>
    <property type="match status" value="1"/>
</dbReference>
<dbReference type="PROSITE" id="PS51733">
    <property type="entry name" value="BPL_LPL_CATALYTIC"/>
    <property type="match status" value="1"/>
</dbReference>
<dbReference type="PROSITE" id="PS01313">
    <property type="entry name" value="LIPB"/>
    <property type="match status" value="1"/>
</dbReference>
<name>LIPB_WIGBR</name>
<evidence type="ECO:0000255" key="1">
    <source>
        <dbReference type="HAMAP-Rule" id="MF_00013"/>
    </source>
</evidence>
<evidence type="ECO:0000255" key="2">
    <source>
        <dbReference type="PROSITE-ProRule" id="PRU01067"/>
    </source>
</evidence>
<keyword id="KW-0012">Acyltransferase</keyword>
<keyword id="KW-0963">Cytoplasm</keyword>
<keyword id="KW-1185">Reference proteome</keyword>
<keyword id="KW-0808">Transferase</keyword>
<feature type="chain" id="PRO_0000062894" description="Octanoyltransferase">
    <location>
        <begin position="1"/>
        <end position="216"/>
    </location>
</feature>
<feature type="domain" description="BPL/LPL catalytic" evidence="2">
    <location>
        <begin position="30"/>
        <end position="204"/>
    </location>
</feature>
<feature type="active site" description="Acyl-thioester intermediate" evidence="1">
    <location>
        <position position="166"/>
    </location>
</feature>
<feature type="binding site" evidence="1">
    <location>
        <begin position="68"/>
        <end position="75"/>
    </location>
    <ligand>
        <name>substrate</name>
    </ligand>
</feature>
<feature type="binding site" evidence="1">
    <location>
        <begin position="135"/>
        <end position="137"/>
    </location>
    <ligand>
        <name>substrate</name>
    </ligand>
</feature>
<feature type="binding site" evidence="1">
    <location>
        <begin position="148"/>
        <end position="150"/>
    </location>
    <ligand>
        <name>substrate</name>
    </ligand>
</feature>
<feature type="site" description="Lowers pKa of active site Cys" evidence="1">
    <location>
        <position position="132"/>
    </location>
</feature>
<gene>
    <name evidence="1" type="primary">lipB</name>
    <name type="ordered locus">WIGBR1750</name>
</gene>
<protein>
    <recommendedName>
        <fullName evidence="1">Octanoyltransferase</fullName>
        <ecNumber evidence="1">2.3.1.181</ecNumber>
    </recommendedName>
    <alternativeName>
        <fullName evidence="1">Lipoate-protein ligase B</fullName>
    </alternativeName>
    <alternativeName>
        <fullName evidence="1">Lipoyl/octanoyl transferase</fullName>
    </alternativeName>
    <alternativeName>
        <fullName evidence="1">Octanoyl-[acyl-carrier-protein]-protein N-octanoyltransferase</fullName>
    </alternativeName>
</protein>
<accession>Q8D326</accession>